<name>RL4_LEPIN</name>
<keyword id="KW-1185">Reference proteome</keyword>
<keyword id="KW-0687">Ribonucleoprotein</keyword>
<keyword id="KW-0689">Ribosomal protein</keyword>
<keyword id="KW-0694">RNA-binding</keyword>
<keyword id="KW-0699">rRNA-binding</keyword>
<gene>
    <name evidence="1" type="primary">rplD</name>
    <name type="ordered locus">LA_0740</name>
</gene>
<sequence>MKAQKYSKEGKLISEIELPSALFESKLSVASIYEAIKAENANLRSGNHATKTRSMVSGGGKKPWSQKGTGRARQGSTRAPHWVGGGTVHGPQKRDYSYKVSSKLKHRAVLSILGKKAQASAVKVVEDLDPKEYNTKAFDSIFKNMNLKNTGVIGLLVQGENDFLKKSVRNIPTVKYINSKRISCRDILYNRNLVITEAALKEMLVQYGAQK</sequence>
<feature type="chain" id="PRO_0000129231" description="Large ribosomal subunit protein uL4">
    <location>
        <begin position="1"/>
        <end position="211"/>
    </location>
</feature>
<feature type="region of interest" description="Disordered" evidence="2">
    <location>
        <begin position="46"/>
        <end position="89"/>
    </location>
</feature>
<feature type="compositionally biased region" description="Polar residues" evidence="2">
    <location>
        <begin position="46"/>
        <end position="55"/>
    </location>
</feature>
<comment type="function">
    <text evidence="1">One of the primary rRNA binding proteins, this protein initially binds near the 5'-end of the 23S rRNA. It is important during the early stages of 50S assembly. It makes multiple contacts with different domains of the 23S rRNA in the assembled 50S subunit and ribosome.</text>
</comment>
<comment type="function">
    <text evidence="1">Forms part of the polypeptide exit tunnel.</text>
</comment>
<comment type="subunit">
    <text evidence="1">Part of the 50S ribosomal subunit.</text>
</comment>
<comment type="similarity">
    <text evidence="1">Belongs to the universal ribosomal protein uL4 family.</text>
</comment>
<reference key="1">
    <citation type="journal article" date="2000" name="FEMS Microbiol. Lett.">
        <title>Characterization of the Leptospira interrogans S10-spc-alpha operon.</title>
        <authorList>
            <person name="Zuerner R.L."/>
            <person name="Hartskeerl R.A."/>
            <person name="van de Kemp H."/>
            <person name="Bal A.E."/>
        </authorList>
    </citation>
    <scope>NUCLEOTIDE SEQUENCE [GENOMIC DNA]</scope>
    <source>
        <strain>Lai / Serogroup Icterohaemorrhagiae / Serovar lai</strain>
    </source>
</reference>
<reference key="2">
    <citation type="journal article" date="2003" name="Nature">
        <title>Unique physiological and pathogenic features of Leptospira interrogans revealed by whole-genome sequencing.</title>
        <authorList>
            <person name="Ren S.-X."/>
            <person name="Fu G."/>
            <person name="Jiang X.-G."/>
            <person name="Zeng R."/>
            <person name="Miao Y.-G."/>
            <person name="Xu H."/>
            <person name="Zhang Y.-X."/>
            <person name="Xiong H."/>
            <person name="Lu G."/>
            <person name="Lu L.-F."/>
            <person name="Jiang H.-Q."/>
            <person name="Jia J."/>
            <person name="Tu Y.-F."/>
            <person name="Jiang J.-X."/>
            <person name="Gu W.-Y."/>
            <person name="Zhang Y.-Q."/>
            <person name="Cai Z."/>
            <person name="Sheng H.-H."/>
            <person name="Yin H.-F."/>
            <person name="Zhang Y."/>
            <person name="Zhu G.-F."/>
            <person name="Wan M."/>
            <person name="Huang H.-L."/>
            <person name="Qian Z."/>
            <person name="Wang S.-Y."/>
            <person name="Ma W."/>
            <person name="Yao Z.-J."/>
            <person name="Shen Y."/>
            <person name="Qiang B.-Q."/>
            <person name="Xia Q.-C."/>
            <person name="Guo X.-K."/>
            <person name="Danchin A."/>
            <person name="Saint Girons I."/>
            <person name="Somerville R.L."/>
            <person name="Wen Y.-M."/>
            <person name="Shi M.-H."/>
            <person name="Chen Z."/>
            <person name="Xu J.-G."/>
            <person name="Zhao G.-P."/>
        </authorList>
    </citation>
    <scope>NUCLEOTIDE SEQUENCE [LARGE SCALE GENOMIC DNA]</scope>
    <source>
        <strain>56601</strain>
    </source>
</reference>
<evidence type="ECO:0000255" key="1">
    <source>
        <dbReference type="HAMAP-Rule" id="MF_01328"/>
    </source>
</evidence>
<evidence type="ECO:0000256" key="2">
    <source>
        <dbReference type="SAM" id="MobiDB-lite"/>
    </source>
</evidence>
<evidence type="ECO:0000305" key="3"/>
<organism>
    <name type="scientific">Leptospira interrogans serogroup Icterohaemorrhagiae serovar Lai (strain 56601)</name>
    <dbReference type="NCBI Taxonomy" id="189518"/>
    <lineage>
        <taxon>Bacteria</taxon>
        <taxon>Pseudomonadati</taxon>
        <taxon>Spirochaetota</taxon>
        <taxon>Spirochaetia</taxon>
        <taxon>Leptospirales</taxon>
        <taxon>Leptospiraceae</taxon>
        <taxon>Leptospira</taxon>
    </lineage>
</organism>
<dbReference type="EMBL" id="AF115283">
    <property type="protein sequence ID" value="AAD40584.1"/>
    <property type="molecule type" value="Genomic_DNA"/>
</dbReference>
<dbReference type="EMBL" id="AE010300">
    <property type="protein sequence ID" value="AAN47939.1"/>
    <property type="molecule type" value="Genomic_DNA"/>
</dbReference>
<dbReference type="RefSeq" id="NP_710921.1">
    <property type="nucleotide sequence ID" value="NC_004342.2"/>
</dbReference>
<dbReference type="RefSeq" id="WP_000647275.1">
    <property type="nucleotide sequence ID" value="NC_004342.2"/>
</dbReference>
<dbReference type="SMR" id="Q9XD35"/>
<dbReference type="FunCoup" id="Q9XD35">
    <property type="interactions" value="595"/>
</dbReference>
<dbReference type="STRING" id="189518.LA_0740"/>
<dbReference type="PaxDb" id="189518-LA_0740"/>
<dbReference type="EnsemblBacteria" id="AAN47939">
    <property type="protein sequence ID" value="AAN47939"/>
    <property type="gene ID" value="LA_0740"/>
</dbReference>
<dbReference type="GeneID" id="61142746"/>
<dbReference type="KEGG" id="lil:LA_0740"/>
<dbReference type="PATRIC" id="fig|189518.3.peg.744"/>
<dbReference type="HOGENOM" id="CLU_041575_5_2_12"/>
<dbReference type="InParanoid" id="Q9XD35"/>
<dbReference type="OrthoDB" id="9803201at2"/>
<dbReference type="Proteomes" id="UP000001408">
    <property type="component" value="Chromosome I"/>
</dbReference>
<dbReference type="GO" id="GO:1990904">
    <property type="term" value="C:ribonucleoprotein complex"/>
    <property type="evidence" value="ECO:0007669"/>
    <property type="project" value="UniProtKB-KW"/>
</dbReference>
<dbReference type="GO" id="GO:0005840">
    <property type="term" value="C:ribosome"/>
    <property type="evidence" value="ECO:0007669"/>
    <property type="project" value="UniProtKB-KW"/>
</dbReference>
<dbReference type="GO" id="GO:0019843">
    <property type="term" value="F:rRNA binding"/>
    <property type="evidence" value="ECO:0007669"/>
    <property type="project" value="UniProtKB-UniRule"/>
</dbReference>
<dbReference type="GO" id="GO:0003735">
    <property type="term" value="F:structural constituent of ribosome"/>
    <property type="evidence" value="ECO:0000318"/>
    <property type="project" value="GO_Central"/>
</dbReference>
<dbReference type="GO" id="GO:0006412">
    <property type="term" value="P:translation"/>
    <property type="evidence" value="ECO:0007669"/>
    <property type="project" value="UniProtKB-UniRule"/>
</dbReference>
<dbReference type="FunFam" id="3.40.1370.10:FF:000014">
    <property type="entry name" value="50S ribosomal protein L4"/>
    <property type="match status" value="1"/>
</dbReference>
<dbReference type="Gene3D" id="3.40.1370.10">
    <property type="match status" value="1"/>
</dbReference>
<dbReference type="HAMAP" id="MF_01328_B">
    <property type="entry name" value="Ribosomal_uL4_B"/>
    <property type="match status" value="1"/>
</dbReference>
<dbReference type="InterPro" id="IPR002136">
    <property type="entry name" value="Ribosomal_uL4"/>
</dbReference>
<dbReference type="InterPro" id="IPR013005">
    <property type="entry name" value="Ribosomal_uL4-like"/>
</dbReference>
<dbReference type="InterPro" id="IPR023574">
    <property type="entry name" value="Ribosomal_uL4_dom_sf"/>
</dbReference>
<dbReference type="NCBIfam" id="TIGR03953">
    <property type="entry name" value="rplD_bact"/>
    <property type="match status" value="1"/>
</dbReference>
<dbReference type="PANTHER" id="PTHR10746">
    <property type="entry name" value="50S RIBOSOMAL PROTEIN L4"/>
    <property type="match status" value="1"/>
</dbReference>
<dbReference type="PANTHER" id="PTHR10746:SF6">
    <property type="entry name" value="LARGE RIBOSOMAL SUBUNIT PROTEIN UL4M"/>
    <property type="match status" value="1"/>
</dbReference>
<dbReference type="Pfam" id="PF00573">
    <property type="entry name" value="Ribosomal_L4"/>
    <property type="match status" value="1"/>
</dbReference>
<dbReference type="SUPFAM" id="SSF52166">
    <property type="entry name" value="Ribosomal protein L4"/>
    <property type="match status" value="1"/>
</dbReference>
<accession>Q9XD35</accession>
<proteinExistence type="inferred from homology"/>
<protein>
    <recommendedName>
        <fullName evidence="1">Large ribosomal subunit protein uL4</fullName>
    </recommendedName>
    <alternativeName>
        <fullName evidence="3">50S ribosomal protein L4</fullName>
    </alternativeName>
</protein>